<accession>A3CPS7</accession>
<protein>
    <recommendedName>
        <fullName evidence="1">UDP-N-acetylmuramate--L-alanine ligase</fullName>
        <ecNumber evidence="1">6.3.2.8</ecNumber>
    </recommendedName>
    <alternativeName>
        <fullName evidence="1">UDP-N-acetylmuramoyl-L-alanine synthetase</fullName>
    </alternativeName>
</protein>
<dbReference type="EC" id="6.3.2.8" evidence="1"/>
<dbReference type="EMBL" id="CP000387">
    <property type="protein sequence ID" value="ABN45182.1"/>
    <property type="molecule type" value="Genomic_DNA"/>
</dbReference>
<dbReference type="RefSeq" id="WP_011837372.1">
    <property type="nucleotide sequence ID" value="NC_009009.1"/>
</dbReference>
<dbReference type="RefSeq" id="YP_001035732.1">
    <property type="nucleotide sequence ID" value="NC_009009.1"/>
</dbReference>
<dbReference type="SMR" id="A3CPS7"/>
<dbReference type="STRING" id="388919.SSA_1800"/>
<dbReference type="KEGG" id="ssa:SSA_1800"/>
<dbReference type="PATRIC" id="fig|388919.9.peg.1707"/>
<dbReference type="eggNOG" id="COG0773">
    <property type="taxonomic scope" value="Bacteria"/>
</dbReference>
<dbReference type="HOGENOM" id="CLU_028104_1_0_9"/>
<dbReference type="OrthoDB" id="9804126at2"/>
<dbReference type="UniPathway" id="UPA00219"/>
<dbReference type="Proteomes" id="UP000002148">
    <property type="component" value="Chromosome"/>
</dbReference>
<dbReference type="GO" id="GO:0005737">
    <property type="term" value="C:cytoplasm"/>
    <property type="evidence" value="ECO:0007669"/>
    <property type="project" value="UniProtKB-SubCell"/>
</dbReference>
<dbReference type="GO" id="GO:0005524">
    <property type="term" value="F:ATP binding"/>
    <property type="evidence" value="ECO:0007669"/>
    <property type="project" value="UniProtKB-UniRule"/>
</dbReference>
<dbReference type="GO" id="GO:0008763">
    <property type="term" value="F:UDP-N-acetylmuramate-L-alanine ligase activity"/>
    <property type="evidence" value="ECO:0007669"/>
    <property type="project" value="UniProtKB-UniRule"/>
</dbReference>
<dbReference type="GO" id="GO:0051301">
    <property type="term" value="P:cell division"/>
    <property type="evidence" value="ECO:0007669"/>
    <property type="project" value="UniProtKB-KW"/>
</dbReference>
<dbReference type="GO" id="GO:0071555">
    <property type="term" value="P:cell wall organization"/>
    <property type="evidence" value="ECO:0007669"/>
    <property type="project" value="UniProtKB-KW"/>
</dbReference>
<dbReference type="GO" id="GO:0009252">
    <property type="term" value="P:peptidoglycan biosynthetic process"/>
    <property type="evidence" value="ECO:0007669"/>
    <property type="project" value="UniProtKB-UniRule"/>
</dbReference>
<dbReference type="GO" id="GO:0008360">
    <property type="term" value="P:regulation of cell shape"/>
    <property type="evidence" value="ECO:0007669"/>
    <property type="project" value="UniProtKB-KW"/>
</dbReference>
<dbReference type="Gene3D" id="3.90.190.20">
    <property type="entry name" value="Mur ligase, C-terminal domain"/>
    <property type="match status" value="1"/>
</dbReference>
<dbReference type="Gene3D" id="3.40.1190.10">
    <property type="entry name" value="Mur-like, catalytic domain"/>
    <property type="match status" value="1"/>
</dbReference>
<dbReference type="Gene3D" id="3.40.50.720">
    <property type="entry name" value="NAD(P)-binding Rossmann-like Domain"/>
    <property type="match status" value="1"/>
</dbReference>
<dbReference type="HAMAP" id="MF_00046">
    <property type="entry name" value="MurC"/>
    <property type="match status" value="1"/>
</dbReference>
<dbReference type="InterPro" id="IPR036565">
    <property type="entry name" value="Mur-like_cat_sf"/>
</dbReference>
<dbReference type="InterPro" id="IPR004101">
    <property type="entry name" value="Mur_ligase_C"/>
</dbReference>
<dbReference type="InterPro" id="IPR036615">
    <property type="entry name" value="Mur_ligase_C_dom_sf"/>
</dbReference>
<dbReference type="InterPro" id="IPR013221">
    <property type="entry name" value="Mur_ligase_cen"/>
</dbReference>
<dbReference type="InterPro" id="IPR000713">
    <property type="entry name" value="Mur_ligase_N"/>
</dbReference>
<dbReference type="InterPro" id="IPR050061">
    <property type="entry name" value="MurCDEF_pg_biosynth"/>
</dbReference>
<dbReference type="InterPro" id="IPR005758">
    <property type="entry name" value="UDP-N-AcMur_Ala_ligase_MurC"/>
</dbReference>
<dbReference type="NCBIfam" id="TIGR01082">
    <property type="entry name" value="murC"/>
    <property type="match status" value="1"/>
</dbReference>
<dbReference type="PANTHER" id="PTHR43445:SF3">
    <property type="entry name" value="UDP-N-ACETYLMURAMATE--L-ALANINE LIGASE"/>
    <property type="match status" value="1"/>
</dbReference>
<dbReference type="PANTHER" id="PTHR43445">
    <property type="entry name" value="UDP-N-ACETYLMURAMATE--L-ALANINE LIGASE-RELATED"/>
    <property type="match status" value="1"/>
</dbReference>
<dbReference type="Pfam" id="PF01225">
    <property type="entry name" value="Mur_ligase"/>
    <property type="match status" value="1"/>
</dbReference>
<dbReference type="Pfam" id="PF02875">
    <property type="entry name" value="Mur_ligase_C"/>
    <property type="match status" value="1"/>
</dbReference>
<dbReference type="Pfam" id="PF08245">
    <property type="entry name" value="Mur_ligase_M"/>
    <property type="match status" value="1"/>
</dbReference>
<dbReference type="SUPFAM" id="SSF51984">
    <property type="entry name" value="MurCD N-terminal domain"/>
    <property type="match status" value="1"/>
</dbReference>
<dbReference type="SUPFAM" id="SSF53623">
    <property type="entry name" value="MurD-like peptide ligases, catalytic domain"/>
    <property type="match status" value="1"/>
</dbReference>
<dbReference type="SUPFAM" id="SSF53244">
    <property type="entry name" value="MurD-like peptide ligases, peptide-binding domain"/>
    <property type="match status" value="1"/>
</dbReference>
<feature type="chain" id="PRO_1000004427" description="UDP-N-acetylmuramate--L-alanine ligase">
    <location>
        <begin position="1"/>
        <end position="444"/>
    </location>
</feature>
<feature type="binding site" evidence="1">
    <location>
        <begin position="110"/>
        <end position="116"/>
    </location>
    <ligand>
        <name>ATP</name>
        <dbReference type="ChEBI" id="CHEBI:30616"/>
    </ligand>
</feature>
<proteinExistence type="inferred from homology"/>
<gene>
    <name evidence="1" type="primary">murC</name>
    <name type="ordered locus">SSA_1800</name>
</gene>
<name>MURC_STRSV</name>
<sequence length="444" mass="49901">MTKTYHFIGIKGSGMSALALMLHQMGHKVQGSDVDKYYFTQRGLEQAGISILPFDEKNIQPDFEIIAGNAFRPDNNVEIAYADANGISYKRYHEFLGSFMRDFVSLGVAGAHGKTSTTGILSHVLSNITDTSYLIGDGTGRGSANAKYFVFESDEYERHFMPYHPEYSIITNIDFDHPDYFTSLEDVFNAFNDYAKQITKGLFIYGEDEQLRRITSNAPIYYYGFKEEGNDFVAHDLLRSTSGSGFKVSFRGQELGEFQIPSFGRHNIMNATAVIGLLYTAGLDLNLVREHLKTFGGVKRRFTEKIVNETVIIDDFAHHPTEIIATLDAARQKYPSKEIVAIFQPHTFTRTIALLDEFAEALNQADSVYLAQIYGSAREVDKGDVKVEDLAEKIVKRAKVIDVDNVSPLLDHDNAVYVFMGAGDIQTYEYSFERLLSNLTSNVQ</sequence>
<comment type="function">
    <text evidence="1">Cell wall formation.</text>
</comment>
<comment type="catalytic activity">
    <reaction evidence="1">
        <text>UDP-N-acetyl-alpha-D-muramate + L-alanine + ATP = UDP-N-acetyl-alpha-D-muramoyl-L-alanine + ADP + phosphate + H(+)</text>
        <dbReference type="Rhea" id="RHEA:23372"/>
        <dbReference type="ChEBI" id="CHEBI:15378"/>
        <dbReference type="ChEBI" id="CHEBI:30616"/>
        <dbReference type="ChEBI" id="CHEBI:43474"/>
        <dbReference type="ChEBI" id="CHEBI:57972"/>
        <dbReference type="ChEBI" id="CHEBI:70757"/>
        <dbReference type="ChEBI" id="CHEBI:83898"/>
        <dbReference type="ChEBI" id="CHEBI:456216"/>
        <dbReference type="EC" id="6.3.2.8"/>
    </reaction>
</comment>
<comment type="pathway">
    <text evidence="1">Cell wall biogenesis; peptidoglycan biosynthesis.</text>
</comment>
<comment type="subcellular location">
    <subcellularLocation>
        <location evidence="1">Cytoplasm</location>
    </subcellularLocation>
</comment>
<comment type="similarity">
    <text evidence="1">Belongs to the MurCDEF family.</text>
</comment>
<reference key="1">
    <citation type="journal article" date="2007" name="J. Bacteriol.">
        <title>Genome of the opportunistic pathogen Streptococcus sanguinis.</title>
        <authorList>
            <person name="Xu P."/>
            <person name="Alves J.M."/>
            <person name="Kitten T."/>
            <person name="Brown A."/>
            <person name="Chen Z."/>
            <person name="Ozaki L.S."/>
            <person name="Manque P."/>
            <person name="Ge X."/>
            <person name="Serrano M.G."/>
            <person name="Puiu D."/>
            <person name="Hendricks S."/>
            <person name="Wang Y."/>
            <person name="Chaplin M.D."/>
            <person name="Akan D."/>
            <person name="Paik S."/>
            <person name="Peterson D.L."/>
            <person name="Macrina F.L."/>
            <person name="Buck G.A."/>
        </authorList>
    </citation>
    <scope>NUCLEOTIDE SEQUENCE [LARGE SCALE GENOMIC DNA]</scope>
    <source>
        <strain>SK36</strain>
    </source>
</reference>
<organism>
    <name type="scientific">Streptococcus sanguinis (strain SK36)</name>
    <dbReference type="NCBI Taxonomy" id="388919"/>
    <lineage>
        <taxon>Bacteria</taxon>
        <taxon>Bacillati</taxon>
        <taxon>Bacillota</taxon>
        <taxon>Bacilli</taxon>
        <taxon>Lactobacillales</taxon>
        <taxon>Streptococcaceae</taxon>
        <taxon>Streptococcus</taxon>
    </lineage>
</organism>
<keyword id="KW-0067">ATP-binding</keyword>
<keyword id="KW-0131">Cell cycle</keyword>
<keyword id="KW-0132">Cell division</keyword>
<keyword id="KW-0133">Cell shape</keyword>
<keyword id="KW-0961">Cell wall biogenesis/degradation</keyword>
<keyword id="KW-0963">Cytoplasm</keyword>
<keyword id="KW-0436">Ligase</keyword>
<keyword id="KW-0547">Nucleotide-binding</keyword>
<keyword id="KW-0573">Peptidoglycan synthesis</keyword>
<keyword id="KW-1185">Reference proteome</keyword>
<evidence type="ECO:0000255" key="1">
    <source>
        <dbReference type="HAMAP-Rule" id="MF_00046"/>
    </source>
</evidence>